<proteinExistence type="inferred from homology"/>
<reference key="1">
    <citation type="journal article" date="2002" name="Nature">
        <title>Comparison of the genomes of two Xanthomonas pathogens with differing host specificities.</title>
        <authorList>
            <person name="da Silva A.C.R."/>
            <person name="Ferro J.A."/>
            <person name="Reinach F.C."/>
            <person name="Farah C.S."/>
            <person name="Furlan L.R."/>
            <person name="Quaggio R.B."/>
            <person name="Monteiro-Vitorello C.B."/>
            <person name="Van Sluys M.A."/>
            <person name="Almeida N.F. Jr."/>
            <person name="Alves L.M.C."/>
            <person name="do Amaral A.M."/>
            <person name="Bertolini M.C."/>
            <person name="Camargo L.E.A."/>
            <person name="Camarotte G."/>
            <person name="Cannavan F."/>
            <person name="Cardozo J."/>
            <person name="Chambergo F."/>
            <person name="Ciapina L.P."/>
            <person name="Cicarelli R.M.B."/>
            <person name="Coutinho L.L."/>
            <person name="Cursino-Santos J.R."/>
            <person name="El-Dorry H."/>
            <person name="Faria J.B."/>
            <person name="Ferreira A.J.S."/>
            <person name="Ferreira R.C.C."/>
            <person name="Ferro M.I.T."/>
            <person name="Formighieri E.F."/>
            <person name="Franco M.C."/>
            <person name="Greggio C.C."/>
            <person name="Gruber A."/>
            <person name="Katsuyama A.M."/>
            <person name="Kishi L.T."/>
            <person name="Leite R.P."/>
            <person name="Lemos E.G.M."/>
            <person name="Lemos M.V.F."/>
            <person name="Locali E.C."/>
            <person name="Machado M.A."/>
            <person name="Madeira A.M.B.N."/>
            <person name="Martinez-Rossi N.M."/>
            <person name="Martins E.C."/>
            <person name="Meidanis J."/>
            <person name="Menck C.F.M."/>
            <person name="Miyaki C.Y."/>
            <person name="Moon D.H."/>
            <person name="Moreira L.M."/>
            <person name="Novo M.T.M."/>
            <person name="Okura V.K."/>
            <person name="Oliveira M.C."/>
            <person name="Oliveira V.R."/>
            <person name="Pereira H.A."/>
            <person name="Rossi A."/>
            <person name="Sena J.A.D."/>
            <person name="Silva C."/>
            <person name="de Souza R.F."/>
            <person name="Spinola L.A.F."/>
            <person name="Takita M.A."/>
            <person name="Tamura R.E."/>
            <person name="Teixeira E.C."/>
            <person name="Tezza R.I.D."/>
            <person name="Trindade dos Santos M."/>
            <person name="Truffi D."/>
            <person name="Tsai S.M."/>
            <person name="White F.F."/>
            <person name="Setubal J.C."/>
            <person name="Kitajima J.P."/>
        </authorList>
    </citation>
    <scope>NUCLEOTIDE SEQUENCE [LARGE SCALE GENOMIC DNA]</scope>
    <source>
        <strain>306</strain>
    </source>
</reference>
<evidence type="ECO:0000255" key="1">
    <source>
        <dbReference type="HAMAP-Rule" id="MF_00564"/>
    </source>
</evidence>
<comment type="function">
    <text evidence="1">Phosphorolytic 3'-5' exoribonuclease that plays an important role in tRNA 3'-end maturation. Removes nucleotide residues following the 3'-CCA terminus of tRNAs; can also add nucleotides to the ends of RNA molecules by using nucleoside diphosphates as substrates, but this may not be physiologically important. Probably plays a role in initiation of 16S rRNA degradation (leading to ribosome degradation) during starvation.</text>
</comment>
<comment type="catalytic activity">
    <reaction evidence="1">
        <text>tRNA(n+1) + phosphate = tRNA(n) + a ribonucleoside 5'-diphosphate</text>
        <dbReference type="Rhea" id="RHEA:10628"/>
        <dbReference type="Rhea" id="RHEA-COMP:17343"/>
        <dbReference type="Rhea" id="RHEA-COMP:17344"/>
        <dbReference type="ChEBI" id="CHEBI:43474"/>
        <dbReference type="ChEBI" id="CHEBI:57930"/>
        <dbReference type="ChEBI" id="CHEBI:173114"/>
        <dbReference type="EC" id="2.7.7.56"/>
    </reaction>
</comment>
<comment type="subunit">
    <text evidence="1">Homohexameric ring arranged as a trimer of dimers.</text>
</comment>
<comment type="similarity">
    <text evidence="1">Belongs to the RNase PH family.</text>
</comment>
<name>RNPH_XANAC</name>
<sequence>MTFSRPSGRTADQLRPVRIERSFTRHAEGSVLVSFGDTRVLCTASVENRVPGFLRGKGEGWVTAEYGMLPRSTHTRSDREAARGKQGGRTLEIQRLIGRALRACVDRNALGERTITLDCDVLQADGGTRTAAITGAYVALADAVNLLIKRGDIKKHPLIGAVAAVSVGIYRGEPVLDLDYPEDSDCDTDMNVVMNDGGGFIELQGTAEGHAFRRDELNALLALAEKGMGELFALQRAALAG</sequence>
<accession>Q8PH63</accession>
<feature type="chain" id="PRO_0000139951" description="Ribonuclease PH">
    <location>
        <begin position="1"/>
        <end position="241"/>
    </location>
</feature>
<feature type="binding site" evidence="1">
    <location>
        <position position="89"/>
    </location>
    <ligand>
        <name>phosphate</name>
        <dbReference type="ChEBI" id="CHEBI:43474"/>
        <note>substrate</note>
    </ligand>
</feature>
<feature type="binding site" evidence="1">
    <location>
        <begin position="127"/>
        <end position="129"/>
    </location>
    <ligand>
        <name>phosphate</name>
        <dbReference type="ChEBI" id="CHEBI:43474"/>
        <note>substrate</note>
    </ligand>
</feature>
<gene>
    <name evidence="1" type="primary">rph</name>
    <name type="ordered locus">XAC3397</name>
</gene>
<protein>
    <recommendedName>
        <fullName evidence="1">Ribonuclease PH</fullName>
        <shortName evidence="1">RNase PH</shortName>
        <ecNumber evidence="1">2.7.7.56</ecNumber>
    </recommendedName>
    <alternativeName>
        <fullName evidence="1">tRNA nucleotidyltransferase</fullName>
    </alternativeName>
</protein>
<dbReference type="EC" id="2.7.7.56" evidence="1"/>
<dbReference type="EMBL" id="AE008923">
    <property type="protein sequence ID" value="AAM38240.1"/>
    <property type="molecule type" value="Genomic_DNA"/>
</dbReference>
<dbReference type="RefSeq" id="WP_005926909.1">
    <property type="nucleotide sequence ID" value="NC_003919.1"/>
</dbReference>
<dbReference type="SMR" id="Q8PH63"/>
<dbReference type="GeneID" id="66912444"/>
<dbReference type="KEGG" id="xac:XAC3397"/>
<dbReference type="eggNOG" id="COG0689">
    <property type="taxonomic scope" value="Bacteria"/>
</dbReference>
<dbReference type="HOGENOM" id="CLU_050858_0_0_6"/>
<dbReference type="Proteomes" id="UP000000576">
    <property type="component" value="Chromosome"/>
</dbReference>
<dbReference type="GO" id="GO:0000175">
    <property type="term" value="F:3'-5'-RNA exonuclease activity"/>
    <property type="evidence" value="ECO:0007669"/>
    <property type="project" value="UniProtKB-UniRule"/>
</dbReference>
<dbReference type="GO" id="GO:0000049">
    <property type="term" value="F:tRNA binding"/>
    <property type="evidence" value="ECO:0007669"/>
    <property type="project" value="UniProtKB-UniRule"/>
</dbReference>
<dbReference type="GO" id="GO:0009022">
    <property type="term" value="F:tRNA nucleotidyltransferase activity"/>
    <property type="evidence" value="ECO:0007669"/>
    <property type="project" value="UniProtKB-UniRule"/>
</dbReference>
<dbReference type="GO" id="GO:0016075">
    <property type="term" value="P:rRNA catabolic process"/>
    <property type="evidence" value="ECO:0007669"/>
    <property type="project" value="UniProtKB-UniRule"/>
</dbReference>
<dbReference type="GO" id="GO:0006364">
    <property type="term" value="P:rRNA processing"/>
    <property type="evidence" value="ECO:0007669"/>
    <property type="project" value="UniProtKB-KW"/>
</dbReference>
<dbReference type="GO" id="GO:0008033">
    <property type="term" value="P:tRNA processing"/>
    <property type="evidence" value="ECO:0007669"/>
    <property type="project" value="UniProtKB-UniRule"/>
</dbReference>
<dbReference type="CDD" id="cd11362">
    <property type="entry name" value="RNase_PH_bact"/>
    <property type="match status" value="1"/>
</dbReference>
<dbReference type="FunFam" id="3.30.230.70:FF:000003">
    <property type="entry name" value="Ribonuclease PH"/>
    <property type="match status" value="1"/>
</dbReference>
<dbReference type="Gene3D" id="3.30.230.70">
    <property type="entry name" value="GHMP Kinase, N-terminal domain"/>
    <property type="match status" value="1"/>
</dbReference>
<dbReference type="HAMAP" id="MF_00564">
    <property type="entry name" value="RNase_PH"/>
    <property type="match status" value="1"/>
</dbReference>
<dbReference type="InterPro" id="IPR001247">
    <property type="entry name" value="ExoRNase_PH_dom1"/>
</dbReference>
<dbReference type="InterPro" id="IPR015847">
    <property type="entry name" value="ExoRNase_PH_dom2"/>
</dbReference>
<dbReference type="InterPro" id="IPR036345">
    <property type="entry name" value="ExoRNase_PH_dom2_sf"/>
</dbReference>
<dbReference type="InterPro" id="IPR027408">
    <property type="entry name" value="PNPase/RNase_PH_dom_sf"/>
</dbReference>
<dbReference type="InterPro" id="IPR020568">
    <property type="entry name" value="Ribosomal_Su5_D2-typ_SF"/>
</dbReference>
<dbReference type="InterPro" id="IPR050080">
    <property type="entry name" value="RNase_PH"/>
</dbReference>
<dbReference type="InterPro" id="IPR002381">
    <property type="entry name" value="RNase_PH_bac-type"/>
</dbReference>
<dbReference type="InterPro" id="IPR018336">
    <property type="entry name" value="RNase_PH_CS"/>
</dbReference>
<dbReference type="NCBIfam" id="TIGR01966">
    <property type="entry name" value="RNasePH"/>
    <property type="match status" value="1"/>
</dbReference>
<dbReference type="PANTHER" id="PTHR11953">
    <property type="entry name" value="EXOSOME COMPLEX COMPONENT"/>
    <property type="match status" value="1"/>
</dbReference>
<dbReference type="PANTHER" id="PTHR11953:SF0">
    <property type="entry name" value="EXOSOME COMPLEX COMPONENT RRP41"/>
    <property type="match status" value="1"/>
</dbReference>
<dbReference type="Pfam" id="PF01138">
    <property type="entry name" value="RNase_PH"/>
    <property type="match status" value="1"/>
</dbReference>
<dbReference type="Pfam" id="PF03725">
    <property type="entry name" value="RNase_PH_C"/>
    <property type="match status" value="1"/>
</dbReference>
<dbReference type="SUPFAM" id="SSF55666">
    <property type="entry name" value="Ribonuclease PH domain 2-like"/>
    <property type="match status" value="1"/>
</dbReference>
<dbReference type="SUPFAM" id="SSF54211">
    <property type="entry name" value="Ribosomal protein S5 domain 2-like"/>
    <property type="match status" value="1"/>
</dbReference>
<dbReference type="PROSITE" id="PS01277">
    <property type="entry name" value="RIBONUCLEASE_PH"/>
    <property type="match status" value="1"/>
</dbReference>
<keyword id="KW-0548">Nucleotidyltransferase</keyword>
<keyword id="KW-0694">RNA-binding</keyword>
<keyword id="KW-0698">rRNA processing</keyword>
<keyword id="KW-0808">Transferase</keyword>
<keyword id="KW-0819">tRNA processing</keyword>
<keyword id="KW-0820">tRNA-binding</keyword>
<organism>
    <name type="scientific">Xanthomonas axonopodis pv. citri (strain 306)</name>
    <dbReference type="NCBI Taxonomy" id="190486"/>
    <lineage>
        <taxon>Bacteria</taxon>
        <taxon>Pseudomonadati</taxon>
        <taxon>Pseudomonadota</taxon>
        <taxon>Gammaproteobacteria</taxon>
        <taxon>Lysobacterales</taxon>
        <taxon>Lysobacteraceae</taxon>
        <taxon>Xanthomonas</taxon>
    </lineage>
</organism>